<accession>Q9BKQ5</accession>
<name>REP1_CAEEL</name>
<dbReference type="EMBL" id="BX284603">
    <property type="protein sequence ID" value="CCD73025.1"/>
    <property type="molecule type" value="Genomic_DNA"/>
</dbReference>
<dbReference type="RefSeq" id="NP_001022928.1">
    <property type="nucleotide sequence ID" value="NM_001027757.6"/>
</dbReference>
<dbReference type="SMR" id="Q9BKQ5"/>
<dbReference type="FunCoup" id="Q9BKQ5">
    <property type="interactions" value="1428"/>
</dbReference>
<dbReference type="STRING" id="6239.Y67D2.1a.1"/>
<dbReference type="PaxDb" id="6239-Y67D2.1a.1"/>
<dbReference type="PeptideAtlas" id="Q9BKQ5"/>
<dbReference type="EnsemblMetazoa" id="Y67D2.1.1">
    <property type="protein sequence ID" value="Y67D2.1.1"/>
    <property type="gene ID" value="WBGene00022051"/>
</dbReference>
<dbReference type="EnsemblMetazoa" id="Y67D2.1.2">
    <property type="protein sequence ID" value="Y67D2.1.2"/>
    <property type="gene ID" value="WBGene00022051"/>
</dbReference>
<dbReference type="GeneID" id="175311"/>
<dbReference type="KEGG" id="cel:CELE_Y67D2.1"/>
<dbReference type="UCSC" id="Y67D2.1b.1">
    <property type="organism name" value="c. elegans"/>
</dbReference>
<dbReference type="AGR" id="WB:WBGene00022051"/>
<dbReference type="CTD" id="175311"/>
<dbReference type="WormBase" id="Y67D2.1">
    <property type="protein sequence ID" value="CE27306"/>
    <property type="gene ID" value="WBGene00022051"/>
    <property type="gene designation" value="rep-1"/>
</dbReference>
<dbReference type="eggNOG" id="KOG4405">
    <property type="taxonomic scope" value="Eukaryota"/>
</dbReference>
<dbReference type="GeneTree" id="ENSGT00950000182994"/>
<dbReference type="HOGENOM" id="CLU_021695_4_1_1"/>
<dbReference type="InParanoid" id="Q9BKQ5"/>
<dbReference type="OMA" id="EHYVLHA"/>
<dbReference type="OrthoDB" id="1923006at2759"/>
<dbReference type="PhylomeDB" id="Q9BKQ5"/>
<dbReference type="Reactome" id="R-CEL-6803205">
    <property type="pathway name" value="TP53 regulates transcription of several additional cell death genes whose specific roles in p53-dependent apoptosis remain uncertain"/>
</dbReference>
<dbReference type="Reactome" id="R-CEL-8873719">
    <property type="pathway name" value="RAB geranylgeranylation"/>
</dbReference>
<dbReference type="Reactome" id="R-CEL-8876198">
    <property type="pathway name" value="RAB GEFs exchange GTP for GDP on RABs"/>
</dbReference>
<dbReference type="PRO" id="PR:Q9BKQ5"/>
<dbReference type="Proteomes" id="UP000001940">
    <property type="component" value="Chromosome III"/>
</dbReference>
<dbReference type="Bgee" id="WBGene00022051">
    <property type="expression patterns" value="Expressed in pharyngeal muscle cell (C elegans) and 3 other cell types or tissues"/>
</dbReference>
<dbReference type="GO" id="GO:0005829">
    <property type="term" value="C:cytosol"/>
    <property type="evidence" value="ECO:0000318"/>
    <property type="project" value="GO_Central"/>
</dbReference>
<dbReference type="GO" id="GO:0005634">
    <property type="term" value="C:nucleus"/>
    <property type="evidence" value="ECO:0000318"/>
    <property type="project" value="GO_Central"/>
</dbReference>
<dbReference type="GO" id="GO:0005968">
    <property type="term" value="C:Rab-protein geranylgeranyltransferase complex"/>
    <property type="evidence" value="ECO:0000318"/>
    <property type="project" value="GO_Central"/>
</dbReference>
<dbReference type="GO" id="GO:0005096">
    <property type="term" value="F:GTPase activator activity"/>
    <property type="evidence" value="ECO:0007669"/>
    <property type="project" value="UniProtKB-KW"/>
</dbReference>
<dbReference type="GO" id="GO:0005093">
    <property type="term" value="F:Rab GDP-dissociation inhibitor activity"/>
    <property type="evidence" value="ECO:0007669"/>
    <property type="project" value="InterPro"/>
</dbReference>
<dbReference type="GO" id="GO:0006886">
    <property type="term" value="P:intracellular protein transport"/>
    <property type="evidence" value="ECO:0007669"/>
    <property type="project" value="InterPro"/>
</dbReference>
<dbReference type="GO" id="GO:0007264">
    <property type="term" value="P:small GTPase-mediated signal transduction"/>
    <property type="evidence" value="ECO:0007669"/>
    <property type="project" value="InterPro"/>
</dbReference>
<dbReference type="GO" id="GO:0016192">
    <property type="term" value="P:vesicle-mediated transport"/>
    <property type="evidence" value="ECO:0000318"/>
    <property type="project" value="GO_Central"/>
</dbReference>
<dbReference type="FunFam" id="1.10.405.10:FF:000003">
    <property type="entry name" value="Rab proteins geranylgeranyltransferase component A"/>
    <property type="match status" value="1"/>
</dbReference>
<dbReference type="Gene3D" id="3.50.50.60">
    <property type="entry name" value="FAD/NAD(P)-binding domain"/>
    <property type="match status" value="1"/>
</dbReference>
<dbReference type="Gene3D" id="1.10.405.10">
    <property type="entry name" value="Guanine Nucleotide Dissociation Inhibitor, domain 1"/>
    <property type="match status" value="1"/>
</dbReference>
<dbReference type="Gene3D" id="3.30.519.10">
    <property type="entry name" value="Guanine Nucleotide Dissociation Inhibitor, domain 2"/>
    <property type="match status" value="1"/>
</dbReference>
<dbReference type="InterPro" id="IPR036188">
    <property type="entry name" value="FAD/NAD-bd_sf"/>
</dbReference>
<dbReference type="InterPro" id="IPR018203">
    <property type="entry name" value="GDP_dissociation_inhibitor"/>
</dbReference>
<dbReference type="InterPro" id="IPR001738">
    <property type="entry name" value="Rab_escort"/>
</dbReference>
<dbReference type="InterPro" id="IPR000806">
    <property type="entry name" value="RabGDI"/>
</dbReference>
<dbReference type="PANTHER" id="PTHR11787:SF4">
    <property type="entry name" value="CHM, RAB ESCORT PROTEIN 1"/>
    <property type="match status" value="1"/>
</dbReference>
<dbReference type="PANTHER" id="PTHR11787">
    <property type="entry name" value="RAB GDP-DISSOCIATION INHIBITOR"/>
    <property type="match status" value="1"/>
</dbReference>
<dbReference type="Pfam" id="PF00996">
    <property type="entry name" value="GDI"/>
    <property type="match status" value="2"/>
</dbReference>
<dbReference type="PIRSF" id="PIRSF016550">
    <property type="entry name" value="Rab_ger_ger_transf_A_euk"/>
    <property type="match status" value="1"/>
</dbReference>
<dbReference type="PRINTS" id="PR00892">
    <property type="entry name" value="RABGDI"/>
</dbReference>
<dbReference type="PRINTS" id="PR00891">
    <property type="entry name" value="RABGDIREP"/>
</dbReference>
<dbReference type="SUPFAM" id="SSF51905">
    <property type="entry name" value="FAD/NAD(P)-binding domain"/>
    <property type="match status" value="1"/>
</dbReference>
<protein>
    <recommendedName>
        <fullName evidence="1">Rab proteins geranylgeranyltransferase component A 1</fullName>
    </recommendedName>
    <alternativeName>
        <fullName evidence="6">Rab escort protein 1</fullName>
    </alternativeName>
    <alternativeName>
        <fullName evidence="1">TCD protein</fullName>
    </alternativeName>
</protein>
<gene>
    <name evidence="6" type="primary">rep-1</name>
    <name evidence="6" type="ORF">Y67D2.1</name>
</gene>
<comment type="function">
    <text evidence="1 3">Substrate-binding subunit of the Rab geranylgeranyltransferase (GGTase) complex (By similarity). Binds unprenylated Rab proteins and presents the substrate peptide to the catalytic component B and remains bound to it after the geranylgeranyl transfer reaction (By similarity). The component A is thought to be regenerated by transferring its prenylated Rab back to the donor membrane (By similarity). Plays a role in neurotransmitter release from presynaptic terminals at neuromuscular junctions (PubMed:19090809). Positively regulates the function of rab-27 in synaptic transmission most likely through mediating rab-27 prenylation (PubMed:19090809).</text>
</comment>
<comment type="subunit">
    <text evidence="3">May interact with rab-5, rab-7 and rab-11 (PubMed:19090809). Does not interact with rab-3, rab-27 and rab-10 (PubMed:19090809).</text>
</comment>
<comment type="subcellular location">
    <subcellularLocation>
        <location evidence="2">Cytoplasm</location>
    </subcellularLocation>
</comment>
<comment type="tissue specificity">
    <text evidence="3">Expressed in several neurons including head neurons, motor neurons located in the ventral nerve cord, HSN and CAN neurons, and tail neurons, and in muscles such as body-wall, pharyngeal, intestinal and anal sphincter (PubMed:19090809). Also expressed in seam cells, the hypodermis and the intestine (PubMed:19090809).</text>
</comment>
<comment type="disruption phenotype">
    <text evidence="3">RNAi-mediated knockdown results in mild defecation defects (PubMed:19090809). RNAi-mediated knockdown increases the levels of unprenylated rab-27 (PubMed:19090809). RNAi-mediated knockdown disrupts the localization of rab-5 and rab-7 (PubMed:19090809).</text>
</comment>
<comment type="similarity">
    <text evidence="2">Belongs to the Rab GDI family.</text>
</comment>
<reference evidence="5" key="1">
    <citation type="journal article" date="1998" name="Science">
        <title>Genome sequence of the nematode C. elegans: a platform for investigating biology.</title>
        <authorList>
            <consortium name="The C. elegans sequencing consortium"/>
        </authorList>
    </citation>
    <scope>NUCLEOTIDE SEQUENCE [LARGE SCALE GENOMIC DNA]</scope>
    <source>
        <strain evidence="5">Bristol N2</strain>
    </source>
</reference>
<reference evidence="4" key="2">
    <citation type="journal article" date="2008" name="Genes Cells">
        <title>Caenorhabditis elegans Rab escort protein (REP-1) differently regulates each Rab protein function and localization in a tissue-dependent manner.</title>
        <authorList>
            <person name="Tanaka D."/>
            <person name="Kameyama K."/>
            <person name="Okamoto H."/>
            <person name="Doi M."/>
        </authorList>
    </citation>
    <scope>FUNCTION</scope>
    <scope>INTERACTION WITH RAB-5; RAB-7 AND RAB-11</scope>
    <scope>TISSUE SPECIFICITY</scope>
    <scope>DISRUPTION PHENOTYPE</scope>
    <scope>MUTAGENESIS OF GLU-107</scope>
</reference>
<proteinExistence type="evidence at protein level"/>
<organism evidence="5">
    <name type="scientific">Caenorhabditis elegans</name>
    <dbReference type="NCBI Taxonomy" id="6239"/>
    <lineage>
        <taxon>Eukaryota</taxon>
        <taxon>Metazoa</taxon>
        <taxon>Ecdysozoa</taxon>
        <taxon>Nematoda</taxon>
        <taxon>Chromadorea</taxon>
        <taxon>Rhabditida</taxon>
        <taxon>Rhabditina</taxon>
        <taxon>Rhabditomorpha</taxon>
        <taxon>Rhabditoidea</taxon>
        <taxon>Rhabditidae</taxon>
        <taxon>Peloderinae</taxon>
        <taxon>Caenorhabditis</taxon>
    </lineage>
</organism>
<feature type="chain" id="PRO_0000454726" description="Rab proteins geranylgeranyltransferase component A 1">
    <location>
        <begin position="1"/>
        <end position="510"/>
    </location>
</feature>
<feature type="mutagenesis site" description="In ta208; embryonic lethality in some animals and reduces brood size. Some animals have abnormal germ-line development and gonad morphology. In severely affected animals, either gonads fail to develop or small traces of gonads are located around the vulva. Mild defecation defects. Disrupts the localization of rab-5, rab-7 and rab-27. Reduces the number of body bends in response to exogenous melatonin. Mild resistance to the acetylcholinesterase inhibitor aldicarb. However, induces paralysis in response to aldicarb in some animals." evidence="3">
    <original>E</original>
    <variation>K</variation>
    <location>
        <position position="107"/>
    </location>
</feature>
<sequence>MDEKLPESVDVVVLGTGLPEAILASACARAGLSVLHLDRNEYYGGDWSSFTMSMVHEVTENQVKKLDSSEISKLSELLTENEQLIELGNREIVENIEMTWIPRGKDEEKPMKTQLEEASQMRRFSIDLVPKILLSKGAMVQTLCDSQVSHYAEFKLVNRQLCPTETPEAGITLNPVPCSKGEIFQSNALSILEKRALMKFITFCTQWSTKDTEEGRKLLAEHADRPFSEFLEQMGVGKTLQSFIINTIGILQQRPTAMTGMLASCQFMDSVGHFGPSPFLFPLYGCGELSQCFCRLAAVFGSLYCLGRPVQAIVKKDGKITAVIANGDRVNCRYIVMSPRFVPETVPASSTLKIERIVYATDKSIKEAEKEQLTLLNLASLRPDAAVSRLVEVGFEACTAPKGHFLVHATGTQEGETSVKTIAEKIFEKNEVEPYWKMSFTANSMKFDTAGAENVVVAPPVDANLHYASVVEECRQLFCTTWPELDFLPRAMKKEEEEEEEPETEEIAEN</sequence>
<keyword id="KW-0963">Cytoplasm</keyword>
<keyword id="KW-0343">GTPase activation</keyword>
<keyword id="KW-1185">Reference proteome</keyword>
<evidence type="ECO:0000250" key="1">
    <source>
        <dbReference type="UniProtKB" id="P24386"/>
    </source>
</evidence>
<evidence type="ECO:0000255" key="2">
    <source>
        <dbReference type="RuleBase" id="RU363124"/>
    </source>
</evidence>
<evidence type="ECO:0000269" key="3">
    <source>
    </source>
</evidence>
<evidence type="ECO:0000305" key="4"/>
<evidence type="ECO:0000312" key="5">
    <source>
        <dbReference type="Proteomes" id="UP000001940"/>
    </source>
</evidence>
<evidence type="ECO:0000312" key="6">
    <source>
        <dbReference type="WormBase" id="Y67D2.1"/>
    </source>
</evidence>